<gene>
    <name evidence="1" type="primary">aroB</name>
    <name type="ordered locus">DET0467</name>
</gene>
<evidence type="ECO:0000255" key="1">
    <source>
        <dbReference type="HAMAP-Rule" id="MF_00110"/>
    </source>
</evidence>
<reference key="1">
    <citation type="journal article" date="2005" name="Science">
        <title>Genome sequence of the PCE-dechlorinating bacterium Dehalococcoides ethenogenes.</title>
        <authorList>
            <person name="Seshadri R."/>
            <person name="Adrian L."/>
            <person name="Fouts D.E."/>
            <person name="Eisen J.A."/>
            <person name="Phillippy A.M."/>
            <person name="Methe B.A."/>
            <person name="Ward N.L."/>
            <person name="Nelson W.C."/>
            <person name="DeBoy R.T."/>
            <person name="Khouri H.M."/>
            <person name="Kolonay J.F."/>
            <person name="Dodson R.J."/>
            <person name="Daugherty S.C."/>
            <person name="Brinkac L.M."/>
            <person name="Sullivan S.A."/>
            <person name="Madupu R."/>
            <person name="Nelson K.E."/>
            <person name="Kang K.H."/>
            <person name="Impraim M."/>
            <person name="Tran K."/>
            <person name="Robinson J.M."/>
            <person name="Forberger H.A."/>
            <person name="Fraser C.M."/>
            <person name="Zinder S.H."/>
            <person name="Heidelberg J.F."/>
        </authorList>
    </citation>
    <scope>NUCLEOTIDE SEQUENCE [LARGE SCALE GENOMIC DNA]</scope>
    <source>
        <strain>ATCC BAA-2266 / KCTC 15142 / 195</strain>
    </source>
</reference>
<comment type="function">
    <text evidence="1">Catalyzes the conversion of 3-deoxy-D-arabino-heptulosonate 7-phosphate (DAHP) to dehydroquinate (DHQ).</text>
</comment>
<comment type="catalytic activity">
    <reaction evidence="1">
        <text>7-phospho-2-dehydro-3-deoxy-D-arabino-heptonate = 3-dehydroquinate + phosphate</text>
        <dbReference type="Rhea" id="RHEA:21968"/>
        <dbReference type="ChEBI" id="CHEBI:32364"/>
        <dbReference type="ChEBI" id="CHEBI:43474"/>
        <dbReference type="ChEBI" id="CHEBI:58394"/>
        <dbReference type="EC" id="4.2.3.4"/>
    </reaction>
</comment>
<comment type="cofactor">
    <cofactor evidence="1">
        <name>Co(2+)</name>
        <dbReference type="ChEBI" id="CHEBI:48828"/>
    </cofactor>
    <cofactor evidence="1">
        <name>Zn(2+)</name>
        <dbReference type="ChEBI" id="CHEBI:29105"/>
    </cofactor>
    <text evidence="1">Binds 1 divalent metal cation per subunit. Can use either Co(2+) or Zn(2+).</text>
</comment>
<comment type="cofactor">
    <cofactor evidence="1">
        <name>NAD(+)</name>
        <dbReference type="ChEBI" id="CHEBI:57540"/>
    </cofactor>
</comment>
<comment type="pathway">
    <text evidence="1">Metabolic intermediate biosynthesis; chorismate biosynthesis; chorismate from D-erythrose 4-phosphate and phosphoenolpyruvate: step 2/7.</text>
</comment>
<comment type="subcellular location">
    <subcellularLocation>
        <location evidence="1">Cytoplasm</location>
    </subcellularLocation>
</comment>
<comment type="similarity">
    <text evidence="1">Belongs to the sugar phosphate cyclases superfamily. Dehydroquinate synthase family.</text>
</comment>
<name>AROB_DEHM1</name>
<feature type="chain" id="PRO_0000231084" description="3-dehydroquinate synthase">
    <location>
        <begin position="1"/>
        <end position="359"/>
    </location>
</feature>
<feature type="binding site" evidence="1">
    <location>
        <begin position="72"/>
        <end position="77"/>
    </location>
    <ligand>
        <name>NAD(+)</name>
        <dbReference type="ChEBI" id="CHEBI:57540"/>
    </ligand>
</feature>
<feature type="binding site" evidence="1">
    <location>
        <begin position="106"/>
        <end position="110"/>
    </location>
    <ligand>
        <name>NAD(+)</name>
        <dbReference type="ChEBI" id="CHEBI:57540"/>
    </ligand>
</feature>
<feature type="binding site" evidence="1">
    <location>
        <begin position="130"/>
        <end position="131"/>
    </location>
    <ligand>
        <name>NAD(+)</name>
        <dbReference type="ChEBI" id="CHEBI:57540"/>
    </ligand>
</feature>
<feature type="binding site" evidence="1">
    <location>
        <position position="143"/>
    </location>
    <ligand>
        <name>NAD(+)</name>
        <dbReference type="ChEBI" id="CHEBI:57540"/>
    </ligand>
</feature>
<feature type="binding site" evidence="1">
    <location>
        <position position="152"/>
    </location>
    <ligand>
        <name>NAD(+)</name>
        <dbReference type="ChEBI" id="CHEBI:57540"/>
    </ligand>
</feature>
<feature type="binding site" evidence="1">
    <location>
        <begin position="170"/>
        <end position="173"/>
    </location>
    <ligand>
        <name>NAD(+)</name>
        <dbReference type="ChEBI" id="CHEBI:57540"/>
    </ligand>
</feature>
<feature type="binding site" evidence="1">
    <location>
        <position position="185"/>
    </location>
    <ligand>
        <name>Zn(2+)</name>
        <dbReference type="ChEBI" id="CHEBI:29105"/>
    </ligand>
</feature>
<feature type="binding site" evidence="1">
    <location>
        <position position="248"/>
    </location>
    <ligand>
        <name>Zn(2+)</name>
        <dbReference type="ChEBI" id="CHEBI:29105"/>
    </ligand>
</feature>
<feature type="binding site" evidence="1">
    <location>
        <position position="264"/>
    </location>
    <ligand>
        <name>Zn(2+)</name>
        <dbReference type="ChEBI" id="CHEBI:29105"/>
    </ligand>
</feature>
<proteinExistence type="inferred from homology"/>
<sequence length="359" mass="39030">MKSIGLNLSGREYKILIGSDLLAETADLLKQAIPCDRVVVITNIDINRLYGKKLKKHLESKGIGSLFLELPEGEIHKSLDMASHIYPQLINHFAERNTPILALGGGVIGDLSGFVAATYQRGVPLVHLPTSLLSQVDSSIGGKVAVNHGGIKNIVGSFYQPRLVISDISCLKTLPEKEFACGMAEIIKSAAIGSSELFKQLETNTPAIKDRSPEIMEDIISQTAAIKAGIVCQDETDRGIRNILNFGHTLGHALESTSSFSQSHGAAVAIGMCFASRLSVKLGLCENETVLRLEKLIADFGLPTRPQDIDPEKIIDAMHHDKKVSDGRIRFILLKRPGEPLIAENILRADVISILEEMK</sequence>
<dbReference type="EC" id="4.2.3.4" evidence="1"/>
<dbReference type="EMBL" id="CP000027">
    <property type="protein sequence ID" value="AAW40204.1"/>
    <property type="molecule type" value="Genomic_DNA"/>
</dbReference>
<dbReference type="RefSeq" id="WP_010936244.1">
    <property type="nucleotide sequence ID" value="NC_002936.3"/>
</dbReference>
<dbReference type="SMR" id="Q3Z988"/>
<dbReference type="FunCoup" id="Q3Z988">
    <property type="interactions" value="333"/>
</dbReference>
<dbReference type="STRING" id="243164.DET0467"/>
<dbReference type="GeneID" id="3230168"/>
<dbReference type="KEGG" id="det:DET0467"/>
<dbReference type="PATRIC" id="fig|243164.10.peg.445"/>
<dbReference type="eggNOG" id="COG0337">
    <property type="taxonomic scope" value="Bacteria"/>
</dbReference>
<dbReference type="HOGENOM" id="CLU_001201_0_2_0"/>
<dbReference type="InParanoid" id="Q3Z988"/>
<dbReference type="UniPathway" id="UPA00053">
    <property type="reaction ID" value="UER00085"/>
</dbReference>
<dbReference type="Proteomes" id="UP000008289">
    <property type="component" value="Chromosome"/>
</dbReference>
<dbReference type="GO" id="GO:0005737">
    <property type="term" value="C:cytoplasm"/>
    <property type="evidence" value="ECO:0007669"/>
    <property type="project" value="UniProtKB-SubCell"/>
</dbReference>
<dbReference type="GO" id="GO:0003856">
    <property type="term" value="F:3-dehydroquinate synthase activity"/>
    <property type="evidence" value="ECO:0007669"/>
    <property type="project" value="UniProtKB-UniRule"/>
</dbReference>
<dbReference type="GO" id="GO:0046872">
    <property type="term" value="F:metal ion binding"/>
    <property type="evidence" value="ECO:0007669"/>
    <property type="project" value="UniProtKB-KW"/>
</dbReference>
<dbReference type="GO" id="GO:0000166">
    <property type="term" value="F:nucleotide binding"/>
    <property type="evidence" value="ECO:0007669"/>
    <property type="project" value="UniProtKB-KW"/>
</dbReference>
<dbReference type="GO" id="GO:0008652">
    <property type="term" value="P:amino acid biosynthetic process"/>
    <property type="evidence" value="ECO:0007669"/>
    <property type="project" value="UniProtKB-KW"/>
</dbReference>
<dbReference type="GO" id="GO:0009073">
    <property type="term" value="P:aromatic amino acid family biosynthetic process"/>
    <property type="evidence" value="ECO:0007669"/>
    <property type="project" value="UniProtKB-KW"/>
</dbReference>
<dbReference type="GO" id="GO:0009423">
    <property type="term" value="P:chorismate biosynthetic process"/>
    <property type="evidence" value="ECO:0007669"/>
    <property type="project" value="UniProtKB-UniRule"/>
</dbReference>
<dbReference type="CDD" id="cd08195">
    <property type="entry name" value="DHQS"/>
    <property type="match status" value="1"/>
</dbReference>
<dbReference type="FunFam" id="3.40.50.1970:FF:000007">
    <property type="entry name" value="Pentafunctional AROM polypeptide"/>
    <property type="match status" value="1"/>
</dbReference>
<dbReference type="Gene3D" id="3.40.50.1970">
    <property type="match status" value="1"/>
</dbReference>
<dbReference type="Gene3D" id="1.20.1090.10">
    <property type="entry name" value="Dehydroquinate synthase-like - alpha domain"/>
    <property type="match status" value="1"/>
</dbReference>
<dbReference type="HAMAP" id="MF_00110">
    <property type="entry name" value="DHQ_synthase"/>
    <property type="match status" value="1"/>
</dbReference>
<dbReference type="InterPro" id="IPR050071">
    <property type="entry name" value="Dehydroquinate_synthase"/>
</dbReference>
<dbReference type="InterPro" id="IPR016037">
    <property type="entry name" value="DHQ_synth_AroB"/>
</dbReference>
<dbReference type="InterPro" id="IPR030963">
    <property type="entry name" value="DHQ_synth_fam"/>
</dbReference>
<dbReference type="InterPro" id="IPR030960">
    <property type="entry name" value="DHQS/DOIS_N"/>
</dbReference>
<dbReference type="InterPro" id="IPR056179">
    <property type="entry name" value="DHQS_C"/>
</dbReference>
<dbReference type="NCBIfam" id="TIGR01357">
    <property type="entry name" value="aroB"/>
    <property type="match status" value="1"/>
</dbReference>
<dbReference type="PANTHER" id="PTHR43622">
    <property type="entry name" value="3-DEHYDROQUINATE SYNTHASE"/>
    <property type="match status" value="1"/>
</dbReference>
<dbReference type="PANTHER" id="PTHR43622:SF1">
    <property type="entry name" value="3-DEHYDROQUINATE SYNTHASE"/>
    <property type="match status" value="1"/>
</dbReference>
<dbReference type="Pfam" id="PF01761">
    <property type="entry name" value="DHQ_synthase"/>
    <property type="match status" value="1"/>
</dbReference>
<dbReference type="Pfam" id="PF24621">
    <property type="entry name" value="DHQS_C"/>
    <property type="match status" value="1"/>
</dbReference>
<dbReference type="PIRSF" id="PIRSF001455">
    <property type="entry name" value="DHQ_synth"/>
    <property type="match status" value="1"/>
</dbReference>
<dbReference type="SUPFAM" id="SSF56796">
    <property type="entry name" value="Dehydroquinate synthase-like"/>
    <property type="match status" value="1"/>
</dbReference>
<keyword id="KW-0028">Amino-acid biosynthesis</keyword>
<keyword id="KW-0057">Aromatic amino acid biosynthesis</keyword>
<keyword id="KW-0170">Cobalt</keyword>
<keyword id="KW-0963">Cytoplasm</keyword>
<keyword id="KW-0456">Lyase</keyword>
<keyword id="KW-0479">Metal-binding</keyword>
<keyword id="KW-0520">NAD</keyword>
<keyword id="KW-0547">Nucleotide-binding</keyword>
<keyword id="KW-0862">Zinc</keyword>
<organism>
    <name type="scientific">Dehalococcoides mccartyi (strain ATCC BAA-2266 / KCTC 15142 / 195)</name>
    <name type="common">Dehalococcoides ethenogenes (strain 195)</name>
    <dbReference type="NCBI Taxonomy" id="243164"/>
    <lineage>
        <taxon>Bacteria</taxon>
        <taxon>Bacillati</taxon>
        <taxon>Chloroflexota</taxon>
        <taxon>Dehalococcoidia</taxon>
        <taxon>Dehalococcoidales</taxon>
        <taxon>Dehalococcoidaceae</taxon>
        <taxon>Dehalococcoides</taxon>
    </lineage>
</organism>
<protein>
    <recommendedName>
        <fullName evidence="1">3-dehydroquinate synthase</fullName>
        <shortName evidence="1">DHQS</shortName>
        <ecNumber evidence="1">4.2.3.4</ecNumber>
    </recommendedName>
</protein>
<accession>Q3Z988</accession>